<feature type="chain" id="PRO_0000269248" description="Neuroguidin-A">
    <location>
        <begin position="1"/>
        <end position="317"/>
    </location>
</feature>
<feature type="region of interest" description="Disordered" evidence="3">
    <location>
        <begin position="125"/>
        <end position="170"/>
    </location>
</feature>
<feature type="region of interest" description="Disordered" evidence="3">
    <location>
        <begin position="280"/>
        <end position="317"/>
    </location>
</feature>
<feature type="compositionally biased region" description="Acidic residues" evidence="3">
    <location>
        <begin position="146"/>
        <end position="157"/>
    </location>
</feature>
<feature type="compositionally biased region" description="Basic residues" evidence="3">
    <location>
        <begin position="297"/>
        <end position="317"/>
    </location>
</feature>
<proteinExistence type="evidence at protein level"/>
<sequence>MAAAGDVILEDVPGSVNLFNTLQDQITKVTAHVQDLTQKVRSGIYNTDKGLSFLELKDQLLLFYLQDLTHLMLEKTNGKSIKGNPGILRLVELRTVLEKMRPIDQKLKYQIDKLVKAAVTGSLGENDPLRFKPNPQNLMSKLSEPDERESDSGEEGAEGGVAKKPQSKVKRYIPPRLAPVHYDDTEAEREHRIVERAKKLALSSSTIRELKEQYSDAPEEIREGRAYHMMRHDKEEQHRINHEESMMVRLNMTRKEKARKKRVLSMTSQLNSLTHFSDISALTGGEGRAEDMVPSMKKSKKGPKKSKKKKGFSRRRH</sequence>
<dbReference type="EMBL" id="BC099295">
    <property type="protein sequence ID" value="AAH99295.1"/>
    <property type="molecule type" value="mRNA"/>
</dbReference>
<dbReference type="RefSeq" id="NP_001088857.1">
    <property type="nucleotide sequence ID" value="NM_001095388.1"/>
</dbReference>
<dbReference type="SMR" id="Q4KLC4"/>
<dbReference type="DNASU" id="496169"/>
<dbReference type="GeneID" id="496169"/>
<dbReference type="KEGG" id="xla:496169"/>
<dbReference type="AGR" id="Xenbase:XB-GENE-946315"/>
<dbReference type="CTD" id="496169"/>
<dbReference type="Xenbase" id="XB-GENE-946315">
    <property type="gene designation" value="ngdn.L"/>
</dbReference>
<dbReference type="OrthoDB" id="203440at2759"/>
<dbReference type="Proteomes" id="UP000186698">
    <property type="component" value="Chromosome 1L"/>
</dbReference>
<dbReference type="Bgee" id="496169">
    <property type="expression patterns" value="Expressed in neurula embryo and 19 other cell types or tissues"/>
</dbReference>
<dbReference type="GO" id="GO:0030424">
    <property type="term" value="C:axon"/>
    <property type="evidence" value="ECO:0007669"/>
    <property type="project" value="UniProtKB-SubCell"/>
</dbReference>
<dbReference type="GO" id="GO:0000775">
    <property type="term" value="C:chromosome, centromeric region"/>
    <property type="evidence" value="ECO:0007669"/>
    <property type="project" value="UniProtKB-SubCell"/>
</dbReference>
<dbReference type="GO" id="GO:0005737">
    <property type="term" value="C:cytoplasm"/>
    <property type="evidence" value="ECO:0007669"/>
    <property type="project" value="UniProtKB-SubCell"/>
</dbReference>
<dbReference type="GO" id="GO:0030425">
    <property type="term" value="C:dendrite"/>
    <property type="evidence" value="ECO:0007669"/>
    <property type="project" value="UniProtKB-SubCell"/>
</dbReference>
<dbReference type="GO" id="GO:0030175">
    <property type="term" value="C:filopodium"/>
    <property type="evidence" value="ECO:0007669"/>
    <property type="project" value="UniProtKB-SubCell"/>
</dbReference>
<dbReference type="GO" id="GO:0005730">
    <property type="term" value="C:nucleolus"/>
    <property type="evidence" value="ECO:0000318"/>
    <property type="project" value="GO_Central"/>
</dbReference>
<dbReference type="GO" id="GO:0032040">
    <property type="term" value="C:small-subunit processome"/>
    <property type="evidence" value="ECO:0000250"/>
    <property type="project" value="UniProtKB"/>
</dbReference>
<dbReference type="GO" id="GO:0000462">
    <property type="term" value="P:maturation of SSU-rRNA from tricistronic rRNA transcript (SSU-rRNA, 5.8S rRNA, LSU-rRNA)"/>
    <property type="evidence" value="ECO:0000318"/>
    <property type="project" value="GO_Central"/>
</dbReference>
<dbReference type="GO" id="GO:0006417">
    <property type="term" value="P:regulation of translation"/>
    <property type="evidence" value="ECO:0007669"/>
    <property type="project" value="UniProtKB-KW"/>
</dbReference>
<dbReference type="GO" id="GO:0042274">
    <property type="term" value="P:ribosomal small subunit biogenesis"/>
    <property type="evidence" value="ECO:0000250"/>
    <property type="project" value="UniProtKB"/>
</dbReference>
<dbReference type="InterPro" id="IPR007146">
    <property type="entry name" value="Sas10/Utp3/C1D"/>
</dbReference>
<dbReference type="PANTHER" id="PTHR13237:SF9">
    <property type="entry name" value="NEUROGUIDIN"/>
    <property type="match status" value="1"/>
</dbReference>
<dbReference type="PANTHER" id="PTHR13237">
    <property type="entry name" value="SOMETHING ABOUT SILENCING PROTEIN 10-RELATED"/>
    <property type="match status" value="1"/>
</dbReference>
<dbReference type="Pfam" id="PF04000">
    <property type="entry name" value="Sas10_Utp3"/>
    <property type="match status" value="1"/>
</dbReference>
<comment type="function">
    <text evidence="1 2">Part of the small subunit (SSU) processome, first precursor of the small eukaryotic ribosomal subunit. During the assembly of the SSU processome in the nucleolus, many ribosome biogenesis factors, an RNA chaperone and ribosomal proteins associate with the nascent pre-rRNA and work in concert to generate RNA folding, modifications, rearrangements and cleavage as well as targeted degradation of pre-ribosomal RNA by the RNA exosome. Its dissociation from the complex determines the transition from state pre-A1 to state pre-A1* (By similarity). May inhibit mRNA translation (By similarity).</text>
</comment>
<comment type="subunit">
    <text evidence="1">Part of the small subunit (SSU) processome, composed of more than 70 proteins and the RNA chaperone small nucleolar RNA (snoRNA) U3.</text>
</comment>
<comment type="subcellular location">
    <subcellularLocation>
        <location evidence="2">Nucleus</location>
    </subcellularLocation>
    <subcellularLocation>
        <location evidence="1">Nucleus</location>
        <location evidence="1">Nucleolus</location>
    </subcellularLocation>
    <subcellularLocation>
        <location evidence="1">Chromosome</location>
        <location evidence="1">Centromere</location>
    </subcellularLocation>
    <subcellularLocation>
        <location evidence="2">Cytoplasm</location>
    </subcellularLocation>
    <subcellularLocation>
        <location evidence="2">Cell projection</location>
        <location evidence="2">Axon</location>
    </subcellularLocation>
    <subcellularLocation>
        <location evidence="2">Cell projection</location>
        <location evidence="2">Dendrite</location>
    </subcellularLocation>
    <subcellularLocation>
        <location evidence="2">Cell projection</location>
        <location evidence="2">Filopodium</location>
    </subcellularLocation>
</comment>
<comment type="developmental stage">
    <text evidence="4">Expressed from the early tailbud stage (at protein level). Expressed in animal pole blastomeres of the four-cell embryo and in the neural crest and neural folds of the neurula stage embryo.</text>
</comment>
<comment type="similarity">
    <text evidence="5">Belongs to the SAS10 family.</text>
</comment>
<protein>
    <recommendedName>
        <fullName>Neuroguidin-A</fullName>
    </recommendedName>
    <alternativeName>
        <fullName>EIF4E-binding protein A</fullName>
    </alternativeName>
</protein>
<accession>Q4KLC4</accession>
<reference key="1">
    <citation type="submission" date="2005-07" db="EMBL/GenBank/DDBJ databases">
        <authorList>
            <consortium name="NIH - Xenopus Gene Collection (XGC) project"/>
        </authorList>
    </citation>
    <scope>NUCLEOTIDE SEQUENCE [LARGE SCALE MRNA]</scope>
</reference>
<reference key="2">
    <citation type="journal article" date="2006" name="Mol. Cell. Biol.">
        <title>Translational control by neuroguidin, a eukaryotic initiation factor 4E and CPEB binding protein.</title>
        <authorList>
            <person name="Jung M.-Y."/>
            <person name="Lorenz L."/>
            <person name="Richter J.D."/>
        </authorList>
    </citation>
    <scope>DEVELOPMENTAL STAGE</scope>
</reference>
<evidence type="ECO:0000250" key="1">
    <source>
        <dbReference type="UniProtKB" id="Q8NEJ9"/>
    </source>
</evidence>
<evidence type="ECO:0000250" key="2">
    <source>
        <dbReference type="UniProtKB" id="Q9DB96"/>
    </source>
</evidence>
<evidence type="ECO:0000256" key="3">
    <source>
        <dbReference type="SAM" id="MobiDB-lite"/>
    </source>
</evidence>
<evidence type="ECO:0000269" key="4">
    <source>
    </source>
</evidence>
<evidence type="ECO:0000305" key="5"/>
<name>NGDNA_XENLA</name>
<keyword id="KW-0966">Cell projection</keyword>
<keyword id="KW-0137">Centromere</keyword>
<keyword id="KW-0158">Chromosome</keyword>
<keyword id="KW-0963">Cytoplasm</keyword>
<keyword id="KW-0539">Nucleus</keyword>
<keyword id="KW-1185">Reference proteome</keyword>
<keyword id="KW-0678">Repressor</keyword>
<keyword id="KW-0810">Translation regulation</keyword>
<organism>
    <name type="scientific">Xenopus laevis</name>
    <name type="common">African clawed frog</name>
    <dbReference type="NCBI Taxonomy" id="8355"/>
    <lineage>
        <taxon>Eukaryota</taxon>
        <taxon>Metazoa</taxon>
        <taxon>Chordata</taxon>
        <taxon>Craniata</taxon>
        <taxon>Vertebrata</taxon>
        <taxon>Euteleostomi</taxon>
        <taxon>Amphibia</taxon>
        <taxon>Batrachia</taxon>
        <taxon>Anura</taxon>
        <taxon>Pipoidea</taxon>
        <taxon>Pipidae</taxon>
        <taxon>Xenopodinae</taxon>
        <taxon>Xenopus</taxon>
        <taxon>Xenopus</taxon>
    </lineage>
</organism>
<gene>
    <name type="primary">ngdn-a</name>
</gene>